<organism>
    <name type="scientific">Staphylococcus aureus (strain Mu50 / ATCC 700699)</name>
    <dbReference type="NCBI Taxonomy" id="158878"/>
    <lineage>
        <taxon>Bacteria</taxon>
        <taxon>Bacillati</taxon>
        <taxon>Bacillota</taxon>
        <taxon>Bacilli</taxon>
        <taxon>Bacillales</taxon>
        <taxon>Staphylococcaceae</taxon>
        <taxon>Staphylococcus</taxon>
    </lineage>
</organism>
<accession>P67500</accession>
<accession>Q99TB6</accession>
<reference key="1">
    <citation type="journal article" date="2001" name="Lancet">
        <title>Whole genome sequencing of meticillin-resistant Staphylococcus aureus.</title>
        <authorList>
            <person name="Kuroda M."/>
            <person name="Ohta T."/>
            <person name="Uchiyama I."/>
            <person name="Baba T."/>
            <person name="Yuzawa H."/>
            <person name="Kobayashi I."/>
            <person name="Cui L."/>
            <person name="Oguchi A."/>
            <person name="Aoki K."/>
            <person name="Nagai Y."/>
            <person name="Lian J.-Q."/>
            <person name="Ito T."/>
            <person name="Kanamori M."/>
            <person name="Matsumaru H."/>
            <person name="Maruyama A."/>
            <person name="Murakami H."/>
            <person name="Hosoyama A."/>
            <person name="Mizutani-Ui Y."/>
            <person name="Takahashi N.K."/>
            <person name="Sawano T."/>
            <person name="Inoue R."/>
            <person name="Kaito C."/>
            <person name="Sekimizu K."/>
            <person name="Hirakawa H."/>
            <person name="Kuhara S."/>
            <person name="Goto S."/>
            <person name="Yabuzaki J."/>
            <person name="Kanehisa M."/>
            <person name="Yamashita A."/>
            <person name="Oshima K."/>
            <person name="Furuya K."/>
            <person name="Yoshino C."/>
            <person name="Shiba T."/>
            <person name="Hattori M."/>
            <person name="Ogasawara N."/>
            <person name="Hayashi H."/>
            <person name="Hiramatsu K."/>
        </authorList>
    </citation>
    <scope>NUCLEOTIDE SEQUENCE [LARGE SCALE GENOMIC DNA]</scope>
    <source>
        <strain>Mu50 / ATCC 700699</strain>
    </source>
</reference>
<keyword id="KW-0489">Methyltransferase</keyword>
<keyword id="KW-0949">S-adenosyl-L-methionine</keyword>
<keyword id="KW-0808">Transferase</keyword>
<keyword id="KW-0819">tRNA processing</keyword>
<name>TRMB_STAAM</name>
<evidence type="ECO:0000250" key="1"/>
<evidence type="ECO:0000255" key="2">
    <source>
        <dbReference type="HAMAP-Rule" id="MF_01057"/>
    </source>
</evidence>
<dbReference type="EC" id="2.1.1.33" evidence="2"/>
<dbReference type="EMBL" id="BA000017">
    <property type="protein sequence ID" value="BAB57910.1"/>
    <property type="molecule type" value="Genomic_DNA"/>
</dbReference>
<dbReference type="RefSeq" id="WP_001266161.1">
    <property type="nucleotide sequence ID" value="NC_002758.2"/>
</dbReference>
<dbReference type="SMR" id="P67500"/>
<dbReference type="KEGG" id="sav:SAV1748"/>
<dbReference type="HOGENOM" id="CLU_050910_2_1_9"/>
<dbReference type="PhylomeDB" id="P67500"/>
<dbReference type="UniPathway" id="UPA00989"/>
<dbReference type="Proteomes" id="UP000002481">
    <property type="component" value="Chromosome"/>
</dbReference>
<dbReference type="GO" id="GO:0043527">
    <property type="term" value="C:tRNA methyltransferase complex"/>
    <property type="evidence" value="ECO:0007669"/>
    <property type="project" value="TreeGrafter"/>
</dbReference>
<dbReference type="GO" id="GO:0008176">
    <property type="term" value="F:tRNA (guanine(46)-N7)-methyltransferase activity"/>
    <property type="evidence" value="ECO:0007669"/>
    <property type="project" value="UniProtKB-UniRule"/>
</dbReference>
<dbReference type="CDD" id="cd02440">
    <property type="entry name" value="AdoMet_MTases"/>
    <property type="match status" value="1"/>
</dbReference>
<dbReference type="FunFam" id="3.40.50.150:FF:000035">
    <property type="entry name" value="tRNA (guanine-N(7)-)-methyltransferase"/>
    <property type="match status" value="1"/>
</dbReference>
<dbReference type="Gene3D" id="3.40.50.150">
    <property type="entry name" value="Vaccinia Virus protein VP39"/>
    <property type="match status" value="1"/>
</dbReference>
<dbReference type="HAMAP" id="MF_01057">
    <property type="entry name" value="tRNA_methyltr_TrmB"/>
    <property type="match status" value="1"/>
</dbReference>
<dbReference type="InterPro" id="IPR029063">
    <property type="entry name" value="SAM-dependent_MTases_sf"/>
</dbReference>
<dbReference type="InterPro" id="IPR003358">
    <property type="entry name" value="tRNA_(Gua-N-7)_MeTrfase_Trmb"/>
</dbReference>
<dbReference type="InterPro" id="IPR055361">
    <property type="entry name" value="tRNA_methyltr_TrmB_bact"/>
</dbReference>
<dbReference type="NCBIfam" id="NF001080">
    <property type="entry name" value="PRK00121.2-2"/>
    <property type="match status" value="1"/>
</dbReference>
<dbReference type="NCBIfam" id="TIGR00091">
    <property type="entry name" value="tRNA (guanosine(46)-N7)-methyltransferase TrmB"/>
    <property type="match status" value="1"/>
</dbReference>
<dbReference type="PANTHER" id="PTHR23417">
    <property type="entry name" value="3-DEOXY-D-MANNO-OCTULOSONIC-ACID TRANSFERASE/TRNA GUANINE-N 7 - -METHYLTRANSFERASE"/>
    <property type="match status" value="1"/>
</dbReference>
<dbReference type="PANTHER" id="PTHR23417:SF14">
    <property type="entry name" value="PENTACOTRIPEPTIDE-REPEAT REGION OF PRORP DOMAIN-CONTAINING PROTEIN"/>
    <property type="match status" value="1"/>
</dbReference>
<dbReference type="Pfam" id="PF02390">
    <property type="entry name" value="Methyltransf_4"/>
    <property type="match status" value="1"/>
</dbReference>
<dbReference type="SUPFAM" id="SSF53335">
    <property type="entry name" value="S-adenosyl-L-methionine-dependent methyltransferases"/>
    <property type="match status" value="1"/>
</dbReference>
<dbReference type="PROSITE" id="PS51625">
    <property type="entry name" value="SAM_MT_TRMB"/>
    <property type="match status" value="1"/>
</dbReference>
<sequence>MRVRYKPWAEDYLKDHPELVDMEGQHAGEMTEWFDKTQPIHIEIGSGMGQFITTLAAQNPHINYISMEREKSIVYKVLDKVKEMGLTNLKIICNDAIELNEYFKDGEVSRIYLNFSDPWPKNRHAKRRLTYHTFLALYQQILNDEGDLHFKTDNRGLFAYSLESMSQFGMYFTKINLNLHQEDDGSNILTEYEKKFSDKGSRIYRMEAKFHSQK</sequence>
<feature type="chain" id="PRO_0000171389" description="tRNA (guanine-N(7)-)-methyltransferase">
    <location>
        <begin position="1"/>
        <end position="214"/>
    </location>
</feature>
<feature type="active site" evidence="1">
    <location>
        <position position="117"/>
    </location>
</feature>
<feature type="binding site" evidence="2">
    <location>
        <position position="43"/>
    </location>
    <ligand>
        <name>S-adenosyl-L-methionine</name>
        <dbReference type="ChEBI" id="CHEBI:59789"/>
    </ligand>
</feature>
<feature type="binding site" evidence="2">
    <location>
        <position position="68"/>
    </location>
    <ligand>
        <name>S-adenosyl-L-methionine</name>
        <dbReference type="ChEBI" id="CHEBI:59789"/>
    </ligand>
</feature>
<feature type="binding site" evidence="2">
    <location>
        <position position="95"/>
    </location>
    <ligand>
        <name>S-adenosyl-L-methionine</name>
        <dbReference type="ChEBI" id="CHEBI:59789"/>
    </ligand>
</feature>
<feature type="binding site" evidence="2">
    <location>
        <position position="117"/>
    </location>
    <ligand>
        <name>S-adenosyl-L-methionine</name>
        <dbReference type="ChEBI" id="CHEBI:59789"/>
    </ligand>
</feature>
<feature type="binding site" evidence="2">
    <location>
        <position position="121"/>
    </location>
    <ligand>
        <name>substrate</name>
    </ligand>
</feature>
<feature type="binding site" evidence="2">
    <location>
        <position position="153"/>
    </location>
    <ligand>
        <name>substrate</name>
    </ligand>
</feature>
<feature type="binding site" evidence="2">
    <location>
        <begin position="190"/>
        <end position="193"/>
    </location>
    <ligand>
        <name>substrate</name>
    </ligand>
</feature>
<gene>
    <name evidence="2" type="primary">trmB</name>
    <name type="ordered locus">SAV1748</name>
</gene>
<protein>
    <recommendedName>
        <fullName evidence="2">tRNA (guanine-N(7)-)-methyltransferase</fullName>
        <ecNumber evidence="2">2.1.1.33</ecNumber>
    </recommendedName>
    <alternativeName>
        <fullName evidence="2">tRNA (guanine(46)-N(7))-methyltransferase</fullName>
    </alternativeName>
    <alternativeName>
        <fullName evidence="2">tRNA(m7G46)-methyltransferase</fullName>
    </alternativeName>
</protein>
<proteinExistence type="inferred from homology"/>
<comment type="function">
    <text evidence="2">Catalyzes the formation of N(7)-methylguanine at position 46 (m7G46) in tRNA.</text>
</comment>
<comment type="catalytic activity">
    <reaction evidence="2">
        <text>guanosine(46) in tRNA + S-adenosyl-L-methionine = N(7)-methylguanosine(46) in tRNA + S-adenosyl-L-homocysteine</text>
        <dbReference type="Rhea" id="RHEA:42708"/>
        <dbReference type="Rhea" id="RHEA-COMP:10188"/>
        <dbReference type="Rhea" id="RHEA-COMP:10189"/>
        <dbReference type="ChEBI" id="CHEBI:57856"/>
        <dbReference type="ChEBI" id="CHEBI:59789"/>
        <dbReference type="ChEBI" id="CHEBI:74269"/>
        <dbReference type="ChEBI" id="CHEBI:74480"/>
        <dbReference type="EC" id="2.1.1.33"/>
    </reaction>
</comment>
<comment type="pathway">
    <text evidence="2">tRNA modification; N(7)-methylguanine-tRNA biosynthesis.</text>
</comment>
<comment type="similarity">
    <text evidence="2">Belongs to the class I-like SAM-binding methyltransferase superfamily. TrmB family.</text>
</comment>